<organism>
    <name type="scientific">Thermotoga neapolitana (strain ATCC 49049 / DSM 4359 / NBRC 107923 / NS-E)</name>
    <dbReference type="NCBI Taxonomy" id="309803"/>
    <lineage>
        <taxon>Bacteria</taxon>
        <taxon>Thermotogati</taxon>
        <taxon>Thermotogota</taxon>
        <taxon>Thermotogae</taxon>
        <taxon>Thermotogales</taxon>
        <taxon>Thermotogaceae</taxon>
        <taxon>Thermotoga</taxon>
    </lineage>
</organism>
<protein>
    <recommendedName>
        <fullName evidence="1">Large ribosomal subunit protein uL15</fullName>
    </recommendedName>
    <alternativeName>
        <fullName evidence="3">50S ribosomal protein L15</fullName>
    </alternativeName>
</protein>
<keyword id="KW-0687">Ribonucleoprotein</keyword>
<keyword id="KW-0689">Ribosomal protein</keyword>
<keyword id="KW-0694">RNA-binding</keyword>
<keyword id="KW-0699">rRNA-binding</keyword>
<sequence length="147" mass="16200">MRLEDLRPTPGSMKKRKRVGRGPGSGHGKTSGRGHKGQKARGTGKVHPWFEGGQTPLQRRLPKRGFKNINKKVYAVVNVKVLEEKFEANEEVTPAKLLERKIVKDMKDGIKILGDGELTKPLIVKAHAFSKSALEKIESVGGKAEVI</sequence>
<reference key="1">
    <citation type="submission" date="2007-11" db="EMBL/GenBank/DDBJ databases">
        <title>The genome sequence of the hyperthermophilic bacterium Thermotoga neapolitana.</title>
        <authorList>
            <person name="Lim S.K."/>
            <person name="Kim J.S."/>
            <person name="Cha S.H."/>
            <person name="Park B.C."/>
            <person name="Lee D.S."/>
            <person name="Tae H.S."/>
            <person name="Kim S.-J."/>
            <person name="Kim J.J."/>
            <person name="Park K.J."/>
            <person name="Lee S.Y."/>
        </authorList>
    </citation>
    <scope>NUCLEOTIDE SEQUENCE [LARGE SCALE GENOMIC DNA]</scope>
    <source>
        <strain>ATCC 49049 / DSM 4359 / NBRC 107923 / NS-E</strain>
    </source>
</reference>
<comment type="function">
    <text evidence="1">Binds to the 23S rRNA.</text>
</comment>
<comment type="subunit">
    <text evidence="1">Part of the 50S ribosomal subunit.</text>
</comment>
<comment type="similarity">
    <text evidence="1">Belongs to the universal ribosomal protein uL15 family.</text>
</comment>
<accession>B9K8A5</accession>
<evidence type="ECO:0000255" key="1">
    <source>
        <dbReference type="HAMAP-Rule" id="MF_01341"/>
    </source>
</evidence>
<evidence type="ECO:0000256" key="2">
    <source>
        <dbReference type="SAM" id="MobiDB-lite"/>
    </source>
</evidence>
<evidence type="ECO:0000305" key="3"/>
<proteinExistence type="inferred from homology"/>
<name>RL15_THENN</name>
<gene>
    <name evidence="1" type="primary">rplO</name>
    <name type="ordered locus">CTN_1012</name>
</gene>
<dbReference type="EMBL" id="CP000916">
    <property type="protein sequence ID" value="ACM23188.1"/>
    <property type="molecule type" value="Genomic_DNA"/>
</dbReference>
<dbReference type="RefSeq" id="WP_015919504.1">
    <property type="nucleotide sequence ID" value="NC_011978.1"/>
</dbReference>
<dbReference type="SMR" id="B9K8A5"/>
<dbReference type="STRING" id="309803.CTN_1012"/>
<dbReference type="KEGG" id="tna:CTN_1012"/>
<dbReference type="eggNOG" id="COG0200">
    <property type="taxonomic scope" value="Bacteria"/>
</dbReference>
<dbReference type="HOGENOM" id="CLU_055188_4_2_0"/>
<dbReference type="Proteomes" id="UP000000445">
    <property type="component" value="Chromosome"/>
</dbReference>
<dbReference type="GO" id="GO:0022625">
    <property type="term" value="C:cytosolic large ribosomal subunit"/>
    <property type="evidence" value="ECO:0007669"/>
    <property type="project" value="TreeGrafter"/>
</dbReference>
<dbReference type="GO" id="GO:0019843">
    <property type="term" value="F:rRNA binding"/>
    <property type="evidence" value="ECO:0007669"/>
    <property type="project" value="UniProtKB-UniRule"/>
</dbReference>
<dbReference type="GO" id="GO:0003735">
    <property type="term" value="F:structural constituent of ribosome"/>
    <property type="evidence" value="ECO:0007669"/>
    <property type="project" value="InterPro"/>
</dbReference>
<dbReference type="GO" id="GO:0006412">
    <property type="term" value="P:translation"/>
    <property type="evidence" value="ECO:0007669"/>
    <property type="project" value="UniProtKB-UniRule"/>
</dbReference>
<dbReference type="FunFam" id="3.100.10.10:FF:000005">
    <property type="entry name" value="50S ribosomal protein L15"/>
    <property type="match status" value="1"/>
</dbReference>
<dbReference type="Gene3D" id="3.100.10.10">
    <property type="match status" value="1"/>
</dbReference>
<dbReference type="HAMAP" id="MF_01341">
    <property type="entry name" value="Ribosomal_uL15"/>
    <property type="match status" value="1"/>
</dbReference>
<dbReference type="InterPro" id="IPR030878">
    <property type="entry name" value="Ribosomal_uL15"/>
</dbReference>
<dbReference type="InterPro" id="IPR021131">
    <property type="entry name" value="Ribosomal_uL15/eL18"/>
</dbReference>
<dbReference type="InterPro" id="IPR036227">
    <property type="entry name" value="Ribosomal_uL15/eL18_sf"/>
</dbReference>
<dbReference type="InterPro" id="IPR005749">
    <property type="entry name" value="Ribosomal_uL15_bac-type"/>
</dbReference>
<dbReference type="InterPro" id="IPR001196">
    <property type="entry name" value="Ribosomal_uL15_CS"/>
</dbReference>
<dbReference type="NCBIfam" id="TIGR01071">
    <property type="entry name" value="rplO_bact"/>
    <property type="match status" value="1"/>
</dbReference>
<dbReference type="PANTHER" id="PTHR12934">
    <property type="entry name" value="50S RIBOSOMAL PROTEIN L15"/>
    <property type="match status" value="1"/>
</dbReference>
<dbReference type="PANTHER" id="PTHR12934:SF11">
    <property type="entry name" value="LARGE RIBOSOMAL SUBUNIT PROTEIN UL15M"/>
    <property type="match status" value="1"/>
</dbReference>
<dbReference type="Pfam" id="PF00828">
    <property type="entry name" value="Ribosomal_L27A"/>
    <property type="match status" value="1"/>
</dbReference>
<dbReference type="SUPFAM" id="SSF52080">
    <property type="entry name" value="Ribosomal proteins L15p and L18e"/>
    <property type="match status" value="1"/>
</dbReference>
<dbReference type="PROSITE" id="PS00475">
    <property type="entry name" value="RIBOSOMAL_L15"/>
    <property type="match status" value="1"/>
</dbReference>
<feature type="chain" id="PRO_1000166321" description="Large ribosomal subunit protein uL15">
    <location>
        <begin position="1"/>
        <end position="147"/>
    </location>
</feature>
<feature type="region of interest" description="Disordered" evidence="2">
    <location>
        <begin position="1"/>
        <end position="57"/>
    </location>
</feature>
<feature type="compositionally biased region" description="Basic residues" evidence="2">
    <location>
        <begin position="30"/>
        <end position="44"/>
    </location>
</feature>